<evidence type="ECO:0000255" key="1">
    <source>
        <dbReference type="HAMAP-Rule" id="MF_00741"/>
    </source>
</evidence>
<keyword id="KW-0067">ATP-binding</keyword>
<keyword id="KW-0963">Cytoplasm</keyword>
<keyword id="KW-0436">Ligase</keyword>
<keyword id="KW-0547">Nucleotide-binding</keyword>
<keyword id="KW-0658">Purine biosynthesis</keyword>
<feature type="chain" id="PRO_1000148272" description="Phosphoribosylformylglycinamidine cyclo-ligase">
    <location>
        <begin position="1"/>
        <end position="331"/>
    </location>
</feature>
<comment type="catalytic activity">
    <reaction evidence="1">
        <text>2-formamido-N(1)-(5-O-phospho-beta-D-ribosyl)acetamidine + ATP = 5-amino-1-(5-phospho-beta-D-ribosyl)imidazole + ADP + phosphate + H(+)</text>
        <dbReference type="Rhea" id="RHEA:23032"/>
        <dbReference type="ChEBI" id="CHEBI:15378"/>
        <dbReference type="ChEBI" id="CHEBI:30616"/>
        <dbReference type="ChEBI" id="CHEBI:43474"/>
        <dbReference type="ChEBI" id="CHEBI:137981"/>
        <dbReference type="ChEBI" id="CHEBI:147287"/>
        <dbReference type="ChEBI" id="CHEBI:456216"/>
        <dbReference type="EC" id="6.3.3.1"/>
    </reaction>
</comment>
<comment type="pathway">
    <text evidence="1">Purine metabolism; IMP biosynthesis via de novo pathway; 5-amino-1-(5-phospho-D-ribosyl)imidazole from N(2)-formyl-N(1)-(5-phospho-D-ribosyl)glycinamide: step 2/2.</text>
</comment>
<comment type="subcellular location">
    <subcellularLocation>
        <location evidence="1">Cytoplasm</location>
    </subcellularLocation>
</comment>
<comment type="similarity">
    <text evidence="1">Belongs to the AIR synthase family.</text>
</comment>
<reference key="1">
    <citation type="submission" date="2008-10" db="EMBL/GenBank/DDBJ databases">
        <title>Genome sequence of Clostridium botulinum A2 Kyoto.</title>
        <authorList>
            <person name="Shrivastava S."/>
            <person name="Brinkac L.M."/>
            <person name="Brown J.L."/>
            <person name="Bruce D."/>
            <person name="Detter C.C."/>
            <person name="Johnson E.A."/>
            <person name="Munk C.A."/>
            <person name="Smith L.A."/>
            <person name="Smith T.J."/>
            <person name="Sutton G."/>
            <person name="Brettin T.S."/>
        </authorList>
    </citation>
    <scope>NUCLEOTIDE SEQUENCE [LARGE SCALE GENOMIC DNA]</scope>
    <source>
        <strain>Kyoto / Type A2</strain>
    </source>
</reference>
<gene>
    <name evidence="1" type="primary">purM</name>
    <name type="ordered locus">CLM_3272</name>
</gene>
<name>PUR5_CLOBJ</name>
<accession>C1FV78</accession>
<sequence length="331" mass="36276">MVSYKEAGVNIEEGYKSVDLIKKHASKTFTKGVLNNLGSFAGMFELPKYKNPVLVSGTDGVGTKLDIAFRMKKYNTVGIDCVAMCINDILCHGAKPLFFLDYIACGKLEAEVAAQLVEGVSNGCIQSECALIGGETAEMPGFYRDGEYDIAGFAVGIAEKDEIIDGSKIEDGDILIGIASSGPHSNGYSLIRKLVEDLHKDFEGNKIGNTLLTPTKIYVKPVMKLLEKYNIKGMAHVTGGGFYENIPRMFKEDFTAVINKKSYPLPNIFSHLISLGIEEDHMYNTFNMGIGFVLCVNEKDGENIIKDLIEMGEKGYKIGYVKKGDKSVELI</sequence>
<protein>
    <recommendedName>
        <fullName evidence="1">Phosphoribosylformylglycinamidine cyclo-ligase</fullName>
        <ecNumber evidence="1">6.3.3.1</ecNumber>
    </recommendedName>
    <alternativeName>
        <fullName evidence="1">AIR synthase</fullName>
    </alternativeName>
    <alternativeName>
        <fullName evidence="1">AIRS</fullName>
    </alternativeName>
    <alternativeName>
        <fullName evidence="1">Phosphoribosyl-aminoimidazole synthetase</fullName>
    </alternativeName>
</protein>
<dbReference type="EC" id="6.3.3.1" evidence="1"/>
<dbReference type="EMBL" id="CP001581">
    <property type="protein sequence ID" value="ACO85590.1"/>
    <property type="molecule type" value="Genomic_DNA"/>
</dbReference>
<dbReference type="RefSeq" id="WP_012099415.1">
    <property type="nucleotide sequence ID" value="NC_012563.1"/>
</dbReference>
<dbReference type="SMR" id="C1FV78"/>
<dbReference type="GeneID" id="5185643"/>
<dbReference type="KEGG" id="cby:CLM_3272"/>
<dbReference type="eggNOG" id="COG0150">
    <property type="taxonomic scope" value="Bacteria"/>
</dbReference>
<dbReference type="HOGENOM" id="CLU_047116_0_0_9"/>
<dbReference type="UniPathway" id="UPA00074">
    <property type="reaction ID" value="UER00129"/>
</dbReference>
<dbReference type="Proteomes" id="UP000001374">
    <property type="component" value="Chromosome"/>
</dbReference>
<dbReference type="GO" id="GO:0005829">
    <property type="term" value="C:cytosol"/>
    <property type="evidence" value="ECO:0007669"/>
    <property type="project" value="TreeGrafter"/>
</dbReference>
<dbReference type="GO" id="GO:0005524">
    <property type="term" value="F:ATP binding"/>
    <property type="evidence" value="ECO:0007669"/>
    <property type="project" value="UniProtKB-KW"/>
</dbReference>
<dbReference type="GO" id="GO:0004637">
    <property type="term" value="F:phosphoribosylamine-glycine ligase activity"/>
    <property type="evidence" value="ECO:0007669"/>
    <property type="project" value="TreeGrafter"/>
</dbReference>
<dbReference type="GO" id="GO:0004641">
    <property type="term" value="F:phosphoribosylformylglycinamidine cyclo-ligase activity"/>
    <property type="evidence" value="ECO:0007669"/>
    <property type="project" value="UniProtKB-UniRule"/>
</dbReference>
<dbReference type="GO" id="GO:0006189">
    <property type="term" value="P:'de novo' IMP biosynthetic process"/>
    <property type="evidence" value="ECO:0007669"/>
    <property type="project" value="UniProtKB-UniRule"/>
</dbReference>
<dbReference type="GO" id="GO:0046084">
    <property type="term" value="P:adenine biosynthetic process"/>
    <property type="evidence" value="ECO:0007669"/>
    <property type="project" value="TreeGrafter"/>
</dbReference>
<dbReference type="CDD" id="cd02196">
    <property type="entry name" value="PurM"/>
    <property type="match status" value="1"/>
</dbReference>
<dbReference type="FunFam" id="3.30.1330.10:FF:000001">
    <property type="entry name" value="Phosphoribosylformylglycinamidine cyclo-ligase"/>
    <property type="match status" value="1"/>
</dbReference>
<dbReference type="FunFam" id="3.90.650.10:FF:000011">
    <property type="entry name" value="Phosphoribosylformylglycinamidine cyclo-ligase"/>
    <property type="match status" value="1"/>
</dbReference>
<dbReference type="Gene3D" id="3.90.650.10">
    <property type="entry name" value="PurM-like C-terminal domain"/>
    <property type="match status" value="1"/>
</dbReference>
<dbReference type="Gene3D" id="3.30.1330.10">
    <property type="entry name" value="PurM-like, N-terminal domain"/>
    <property type="match status" value="1"/>
</dbReference>
<dbReference type="HAMAP" id="MF_00741">
    <property type="entry name" value="AIRS"/>
    <property type="match status" value="1"/>
</dbReference>
<dbReference type="InterPro" id="IPR010918">
    <property type="entry name" value="PurM-like_C_dom"/>
</dbReference>
<dbReference type="InterPro" id="IPR036676">
    <property type="entry name" value="PurM-like_C_sf"/>
</dbReference>
<dbReference type="InterPro" id="IPR016188">
    <property type="entry name" value="PurM-like_N"/>
</dbReference>
<dbReference type="InterPro" id="IPR036921">
    <property type="entry name" value="PurM-like_N_sf"/>
</dbReference>
<dbReference type="InterPro" id="IPR004733">
    <property type="entry name" value="PurM_cligase"/>
</dbReference>
<dbReference type="NCBIfam" id="TIGR00878">
    <property type="entry name" value="purM"/>
    <property type="match status" value="1"/>
</dbReference>
<dbReference type="PANTHER" id="PTHR10520:SF12">
    <property type="entry name" value="TRIFUNCTIONAL PURINE BIOSYNTHETIC PROTEIN ADENOSINE-3"/>
    <property type="match status" value="1"/>
</dbReference>
<dbReference type="PANTHER" id="PTHR10520">
    <property type="entry name" value="TRIFUNCTIONAL PURINE BIOSYNTHETIC PROTEIN ADENOSINE-3-RELATED"/>
    <property type="match status" value="1"/>
</dbReference>
<dbReference type="Pfam" id="PF00586">
    <property type="entry name" value="AIRS"/>
    <property type="match status" value="1"/>
</dbReference>
<dbReference type="Pfam" id="PF02769">
    <property type="entry name" value="AIRS_C"/>
    <property type="match status" value="1"/>
</dbReference>
<dbReference type="SUPFAM" id="SSF56042">
    <property type="entry name" value="PurM C-terminal domain-like"/>
    <property type="match status" value="1"/>
</dbReference>
<dbReference type="SUPFAM" id="SSF55326">
    <property type="entry name" value="PurM N-terminal domain-like"/>
    <property type="match status" value="1"/>
</dbReference>
<proteinExistence type="inferred from homology"/>
<organism>
    <name type="scientific">Clostridium botulinum (strain Kyoto / Type A2)</name>
    <dbReference type="NCBI Taxonomy" id="536232"/>
    <lineage>
        <taxon>Bacteria</taxon>
        <taxon>Bacillati</taxon>
        <taxon>Bacillota</taxon>
        <taxon>Clostridia</taxon>
        <taxon>Eubacteriales</taxon>
        <taxon>Clostridiaceae</taxon>
        <taxon>Clostridium</taxon>
    </lineage>
</organism>